<evidence type="ECO:0000250" key="1">
    <source>
        <dbReference type="UniProtKB" id="E9Q6B2"/>
    </source>
</evidence>
<evidence type="ECO:0000255" key="2"/>
<evidence type="ECO:0000256" key="3">
    <source>
        <dbReference type="SAM" id="MobiDB-lite"/>
    </source>
</evidence>
<evidence type="ECO:0000269" key="4">
    <source>
    </source>
</evidence>
<evidence type="ECO:0000305" key="5"/>
<evidence type="ECO:0000305" key="6">
    <source>
    </source>
</evidence>
<evidence type="ECO:0007744" key="7">
    <source>
    </source>
</evidence>
<evidence type="ECO:0007744" key="8">
    <source>
    </source>
</evidence>
<evidence type="ECO:0007744" key="9">
    <source>
    </source>
</evidence>
<evidence type="ECO:0007744" key="10">
    <source>
    </source>
</evidence>
<proteinExistence type="evidence at protein level"/>
<dbReference type="EMBL" id="AL110504">
    <property type="status" value="NOT_ANNOTATED_CDS"/>
    <property type="molecule type" value="Genomic_DNA"/>
</dbReference>
<dbReference type="EMBL" id="AL160313">
    <property type="status" value="NOT_ANNOTATED_CDS"/>
    <property type="molecule type" value="Genomic_DNA"/>
</dbReference>
<dbReference type="CCDS" id="CCDS45161.1"/>
<dbReference type="RefSeq" id="NP_001138467.1">
    <property type="nucleotide sequence ID" value="NM_001144995.2"/>
</dbReference>
<dbReference type="SMR" id="A6NKD9"/>
<dbReference type="BioGRID" id="130463">
    <property type="interactions" value="130"/>
</dbReference>
<dbReference type="DIP" id="DIP-56878N"/>
<dbReference type="FunCoup" id="A6NKD9">
    <property type="interactions" value="866"/>
</dbReference>
<dbReference type="IntAct" id="A6NKD9">
    <property type="interactions" value="85"/>
</dbReference>
<dbReference type="MINT" id="A6NKD9"/>
<dbReference type="STRING" id="9606.ENSP00000369592"/>
<dbReference type="GlyGen" id="A6NKD9">
    <property type="glycosylation" value="1 site, 1 O-linked glycan (1 site)"/>
</dbReference>
<dbReference type="iPTMnet" id="A6NKD9"/>
<dbReference type="PhosphoSitePlus" id="A6NKD9"/>
<dbReference type="BioMuta" id="CCDC85C"/>
<dbReference type="jPOST" id="A6NKD9"/>
<dbReference type="MassIVE" id="A6NKD9"/>
<dbReference type="PaxDb" id="9606-ENSP00000369592"/>
<dbReference type="PeptideAtlas" id="A6NKD9"/>
<dbReference type="ProteomicsDB" id="1405"/>
<dbReference type="Pumba" id="A6NKD9"/>
<dbReference type="Antibodypedia" id="54727">
    <property type="antibodies" value="73 antibodies from 14 providers"/>
</dbReference>
<dbReference type="DNASU" id="317762"/>
<dbReference type="Ensembl" id="ENST00000380243.9">
    <property type="protein sequence ID" value="ENSP00000369592.4"/>
    <property type="gene ID" value="ENSG00000205476.9"/>
</dbReference>
<dbReference type="GeneID" id="317762"/>
<dbReference type="KEGG" id="hsa:317762"/>
<dbReference type="MANE-Select" id="ENST00000380243.9">
    <property type="protein sequence ID" value="ENSP00000369592.4"/>
    <property type="RefSeq nucleotide sequence ID" value="NM_001144995.2"/>
    <property type="RefSeq protein sequence ID" value="NP_001138467.1"/>
</dbReference>
<dbReference type="UCSC" id="uc010avr.4">
    <property type="organism name" value="human"/>
</dbReference>
<dbReference type="AGR" id="HGNC:35459"/>
<dbReference type="CTD" id="317762"/>
<dbReference type="DisGeNET" id="317762"/>
<dbReference type="GeneCards" id="CCDC85C"/>
<dbReference type="HGNC" id="HGNC:35459">
    <property type="gene designation" value="CCDC85C"/>
</dbReference>
<dbReference type="HPA" id="ENSG00000205476">
    <property type="expression patterns" value="Tissue enhanced (brain)"/>
</dbReference>
<dbReference type="neXtProt" id="NX_A6NKD9"/>
<dbReference type="OpenTargets" id="ENSG00000205476"/>
<dbReference type="PharmGKB" id="PA164717760"/>
<dbReference type="VEuPathDB" id="HostDB:ENSG00000205476"/>
<dbReference type="eggNOG" id="KOG3819">
    <property type="taxonomic scope" value="Eukaryota"/>
</dbReference>
<dbReference type="GeneTree" id="ENSGT00940000159071"/>
<dbReference type="HOGENOM" id="CLU_028762_0_0_1"/>
<dbReference type="InParanoid" id="A6NKD9"/>
<dbReference type="OMA" id="TDNEKMN"/>
<dbReference type="OrthoDB" id="10056395at2759"/>
<dbReference type="PAN-GO" id="A6NKD9">
    <property type="GO annotations" value="1 GO annotation based on evolutionary models"/>
</dbReference>
<dbReference type="PhylomeDB" id="A6NKD9"/>
<dbReference type="TreeFam" id="TF320243"/>
<dbReference type="PathwayCommons" id="A6NKD9"/>
<dbReference type="SignaLink" id="A6NKD9"/>
<dbReference type="BioGRID-ORCS" id="317762">
    <property type="hits" value="14 hits in 1164 CRISPR screens"/>
</dbReference>
<dbReference type="CD-CODE" id="DEE660B4">
    <property type="entry name" value="Stress granule"/>
</dbReference>
<dbReference type="ChiTaRS" id="CCDC85C">
    <property type="organism name" value="human"/>
</dbReference>
<dbReference type="GenomeRNAi" id="317762"/>
<dbReference type="Pharos" id="A6NKD9">
    <property type="development level" value="Tbio"/>
</dbReference>
<dbReference type="PRO" id="PR:A6NKD9"/>
<dbReference type="Proteomes" id="UP000005640">
    <property type="component" value="Chromosome 14"/>
</dbReference>
<dbReference type="RNAct" id="A6NKD9">
    <property type="molecule type" value="protein"/>
</dbReference>
<dbReference type="Bgee" id="ENSG00000205476">
    <property type="expression patterns" value="Expressed in right hemisphere of cerebellum and 139 other cell types or tissues"/>
</dbReference>
<dbReference type="ExpressionAtlas" id="A6NKD9">
    <property type="expression patterns" value="baseline and differential"/>
</dbReference>
<dbReference type="GO" id="GO:0005912">
    <property type="term" value="C:adherens junction"/>
    <property type="evidence" value="ECO:0000314"/>
    <property type="project" value="UniProtKB"/>
</dbReference>
<dbReference type="GO" id="GO:0043296">
    <property type="term" value="C:apical junction complex"/>
    <property type="evidence" value="ECO:0000250"/>
    <property type="project" value="UniProtKB"/>
</dbReference>
<dbReference type="GO" id="GO:0005923">
    <property type="term" value="C:bicellular tight junction"/>
    <property type="evidence" value="ECO:0007669"/>
    <property type="project" value="UniProtKB-SubCell"/>
</dbReference>
<dbReference type="GO" id="GO:0030054">
    <property type="term" value="C:cell junction"/>
    <property type="evidence" value="ECO:0000314"/>
    <property type="project" value="HPA"/>
</dbReference>
<dbReference type="GO" id="GO:0016607">
    <property type="term" value="C:nuclear speck"/>
    <property type="evidence" value="ECO:0000314"/>
    <property type="project" value="HPA"/>
</dbReference>
<dbReference type="GO" id="GO:0008283">
    <property type="term" value="P:cell population proliferation"/>
    <property type="evidence" value="ECO:0007669"/>
    <property type="project" value="Ensembl"/>
</dbReference>
<dbReference type="GO" id="GO:0021987">
    <property type="term" value="P:cerebral cortex development"/>
    <property type="evidence" value="ECO:0000250"/>
    <property type="project" value="UniProtKB"/>
</dbReference>
<dbReference type="GO" id="GO:0030010">
    <property type="term" value="P:establishment of cell polarity"/>
    <property type="evidence" value="ECO:0007669"/>
    <property type="project" value="Ensembl"/>
</dbReference>
<dbReference type="GO" id="GO:0045184">
    <property type="term" value="P:establishment of protein localization"/>
    <property type="evidence" value="ECO:0007669"/>
    <property type="project" value="Ensembl"/>
</dbReference>
<dbReference type="GO" id="GO:0007219">
    <property type="term" value="P:Notch signaling pathway"/>
    <property type="evidence" value="ECO:0007669"/>
    <property type="project" value="Ensembl"/>
</dbReference>
<dbReference type="GO" id="GO:0060019">
    <property type="term" value="P:radial glial cell differentiation"/>
    <property type="evidence" value="ECO:0007669"/>
    <property type="project" value="Ensembl"/>
</dbReference>
<dbReference type="InterPro" id="IPR019359">
    <property type="entry name" value="CCDC85"/>
</dbReference>
<dbReference type="PANTHER" id="PTHR13546:SF14">
    <property type="entry name" value="COILED-COIL DOMAIN-CONTAINING PROTEIN 85C"/>
    <property type="match status" value="1"/>
</dbReference>
<dbReference type="PANTHER" id="PTHR13546">
    <property type="entry name" value="RE60986P"/>
    <property type="match status" value="1"/>
</dbReference>
<dbReference type="Pfam" id="PF10226">
    <property type="entry name" value="CCDC85"/>
    <property type="match status" value="1"/>
</dbReference>
<gene>
    <name type="primary">CCDC85C</name>
</gene>
<comment type="function">
    <text evidence="1 6">May play a role in cell-cell adhesion and epithelium development through its interaction with proteins of the beta-catenin family (Probable). May play an important role in cortical development, especially in the maintenance of radial glia (By similarity).</text>
</comment>
<comment type="subunit">
    <text evidence="6">May interact with ARVCF, CTNND1, CTNND2 and PKP4.</text>
</comment>
<comment type="interaction">
    <interactant intactId="EBI-2561671">
        <id>A6NKD9</id>
    </interactant>
    <interactant intactId="EBI-746202">
        <id>O00444</id>
        <label>PLK4</label>
    </interactant>
    <organismsDiffer>false</organismsDiffer>
    <experiments>2</experiments>
</comment>
<comment type="subcellular location">
    <subcellularLocation>
        <location evidence="1">Cell junction</location>
        <location evidence="1">Tight junction</location>
    </subcellularLocation>
    <subcellularLocation>
        <location evidence="4">Cell junction</location>
        <location evidence="4">Adherens junction</location>
    </subcellularLocation>
    <text evidence="1">Localizes to the apical junction of radial glia in the wall of lateral ventricles of the developing brain. Colocalizes with TJP1 on the meshwork-like structure of adherens junctions on the lateral ventricles wall.</text>
</comment>
<comment type="similarity">
    <text evidence="5">Belongs to the CCDC85 family.</text>
</comment>
<name>CC85C_HUMAN</name>
<keyword id="KW-0007">Acetylation</keyword>
<keyword id="KW-0965">Cell junction</keyword>
<keyword id="KW-0175">Coiled coil</keyword>
<keyword id="KW-0217">Developmental protein</keyword>
<keyword id="KW-0597">Phosphoprotein</keyword>
<keyword id="KW-1267">Proteomics identification</keyword>
<keyword id="KW-1185">Reference proteome</keyword>
<keyword id="KW-0796">Tight junction</keyword>
<sequence length="419" mass="45210">MAKPAATAAAASEELSQVPDEELLRWSKEELARRLRRAEGEKVGLMLEHGGLMRDVNRRLQQHLLEIRGLKDVNQRLQDDNQELRELCCFLDDDRQKGRKLAREWQRFGRHAAGAVWHEVARSQQKLRELEARQEALLRENLELKELVLLLDEERAALAATGAASGGGGGGGGAGSRSSIDSQASLSGPLSGGAPGAGARDVGDGSSTSSAGSGGSPDHHHHVPPPLLPPGPHKAPDGKAGATRRSLDDLSAPPHHRSIPNGLHDPSSTYIRQLESKVRLLEGDKLLAQQAGSGEFRTLRKGFSPYHSESQLASLPPSYQDSLQNGPACPAPELPSPPSAGYSPAGQKPEAVVHAMKVLEVHENLDRQLQDSCEEDLSEKEKAIVREMCNVVWRKLGDAASSKPSIRQHLSGNQFKGPL</sequence>
<feature type="initiator methionine" description="Removed" evidence="8">
    <location>
        <position position="1"/>
    </location>
</feature>
<feature type="chain" id="PRO_0000345410" description="Coiled-coil domain-containing protein 85C">
    <location>
        <begin position="2"/>
        <end position="419"/>
    </location>
</feature>
<feature type="region of interest" description="Disordered" evidence="3">
    <location>
        <begin position="162"/>
        <end position="268"/>
    </location>
</feature>
<feature type="region of interest" description="Disordered" evidence="3">
    <location>
        <begin position="307"/>
        <end position="348"/>
    </location>
</feature>
<feature type="coiled-coil region" evidence="2">
    <location>
        <begin position="22"/>
        <end position="88"/>
    </location>
</feature>
<feature type="coiled-coil region" evidence="2">
    <location>
        <begin position="118"/>
        <end position="159"/>
    </location>
</feature>
<feature type="compositionally biased region" description="Gly residues" evidence="3">
    <location>
        <begin position="164"/>
        <end position="175"/>
    </location>
</feature>
<feature type="compositionally biased region" description="Low complexity" evidence="3">
    <location>
        <begin position="176"/>
        <end position="189"/>
    </location>
</feature>
<feature type="compositionally biased region" description="Pro residues" evidence="3">
    <location>
        <begin position="224"/>
        <end position="233"/>
    </location>
</feature>
<feature type="compositionally biased region" description="Polar residues" evidence="3">
    <location>
        <begin position="307"/>
        <end position="325"/>
    </location>
</feature>
<feature type="compositionally biased region" description="Pro residues" evidence="3">
    <location>
        <begin position="329"/>
        <end position="338"/>
    </location>
</feature>
<feature type="modified residue" description="N-acetylalanine" evidence="8">
    <location>
        <position position="2"/>
    </location>
</feature>
<feature type="modified residue" description="Phosphoserine" evidence="10">
    <location>
        <position position="178"/>
    </location>
</feature>
<feature type="modified residue" description="Phosphoserine" evidence="7 9 10">
    <location>
        <position position="246"/>
    </location>
</feature>
<accession>A6NKD9</accession>
<organism>
    <name type="scientific">Homo sapiens</name>
    <name type="common">Human</name>
    <dbReference type="NCBI Taxonomy" id="9606"/>
    <lineage>
        <taxon>Eukaryota</taxon>
        <taxon>Metazoa</taxon>
        <taxon>Chordata</taxon>
        <taxon>Craniata</taxon>
        <taxon>Vertebrata</taxon>
        <taxon>Euteleostomi</taxon>
        <taxon>Mammalia</taxon>
        <taxon>Eutheria</taxon>
        <taxon>Euarchontoglires</taxon>
        <taxon>Primates</taxon>
        <taxon>Haplorrhini</taxon>
        <taxon>Catarrhini</taxon>
        <taxon>Hominidae</taxon>
        <taxon>Homo</taxon>
    </lineage>
</organism>
<reference key="1">
    <citation type="journal article" date="2003" name="Nature">
        <title>The DNA sequence and analysis of human chromosome 14.</title>
        <authorList>
            <person name="Heilig R."/>
            <person name="Eckenberg R."/>
            <person name="Petit J.-L."/>
            <person name="Fonknechten N."/>
            <person name="Da Silva C."/>
            <person name="Cattolico L."/>
            <person name="Levy M."/>
            <person name="Barbe V."/>
            <person name="De Berardinis V."/>
            <person name="Ureta-Vidal A."/>
            <person name="Pelletier E."/>
            <person name="Vico V."/>
            <person name="Anthouard V."/>
            <person name="Rowen L."/>
            <person name="Madan A."/>
            <person name="Qin S."/>
            <person name="Sun H."/>
            <person name="Du H."/>
            <person name="Pepin K."/>
            <person name="Artiguenave F."/>
            <person name="Robert C."/>
            <person name="Cruaud C."/>
            <person name="Bruels T."/>
            <person name="Jaillon O."/>
            <person name="Friedlander L."/>
            <person name="Samson G."/>
            <person name="Brottier P."/>
            <person name="Cure S."/>
            <person name="Segurens B."/>
            <person name="Aniere F."/>
            <person name="Samain S."/>
            <person name="Crespeau H."/>
            <person name="Abbasi N."/>
            <person name="Aiach N."/>
            <person name="Boscus D."/>
            <person name="Dickhoff R."/>
            <person name="Dors M."/>
            <person name="Dubois I."/>
            <person name="Friedman C."/>
            <person name="Gouyvenoux M."/>
            <person name="James R."/>
            <person name="Madan A."/>
            <person name="Mairey-Estrada B."/>
            <person name="Mangenot S."/>
            <person name="Martins N."/>
            <person name="Menard M."/>
            <person name="Oztas S."/>
            <person name="Ratcliffe A."/>
            <person name="Shaffer T."/>
            <person name="Trask B."/>
            <person name="Vacherie B."/>
            <person name="Bellemere C."/>
            <person name="Belser C."/>
            <person name="Besnard-Gonnet M."/>
            <person name="Bartol-Mavel D."/>
            <person name="Boutard M."/>
            <person name="Briez-Silla S."/>
            <person name="Combette S."/>
            <person name="Dufosse-Laurent V."/>
            <person name="Ferron C."/>
            <person name="Lechaplais C."/>
            <person name="Louesse C."/>
            <person name="Muselet D."/>
            <person name="Magdelenat G."/>
            <person name="Pateau E."/>
            <person name="Petit E."/>
            <person name="Sirvain-Trukniewicz P."/>
            <person name="Trybou A."/>
            <person name="Vega-Czarny N."/>
            <person name="Bataille E."/>
            <person name="Bluet E."/>
            <person name="Bordelais I."/>
            <person name="Dubois M."/>
            <person name="Dumont C."/>
            <person name="Guerin T."/>
            <person name="Haffray S."/>
            <person name="Hammadi R."/>
            <person name="Muanga J."/>
            <person name="Pellouin V."/>
            <person name="Robert D."/>
            <person name="Wunderle E."/>
            <person name="Gauguet G."/>
            <person name="Roy A."/>
            <person name="Sainte-Marthe L."/>
            <person name="Verdier J."/>
            <person name="Verdier-Discala C."/>
            <person name="Hillier L.W."/>
            <person name="Fulton L."/>
            <person name="McPherson J."/>
            <person name="Matsuda F."/>
            <person name="Wilson R."/>
            <person name="Scarpelli C."/>
            <person name="Gyapay G."/>
            <person name="Wincker P."/>
            <person name="Saurin W."/>
            <person name="Quetier F."/>
            <person name="Waterston R."/>
            <person name="Hood L."/>
            <person name="Weissenbach J."/>
        </authorList>
    </citation>
    <scope>NUCLEOTIDE SEQUENCE [LARGE SCALE GENOMIC DNA]</scope>
</reference>
<reference key="2">
    <citation type="journal article" date="2009" name="Anal. Chem.">
        <title>Lys-N and trypsin cover complementary parts of the phosphoproteome in a refined SCX-based approach.</title>
        <authorList>
            <person name="Gauci S."/>
            <person name="Helbig A.O."/>
            <person name="Slijper M."/>
            <person name="Krijgsveld J."/>
            <person name="Heck A.J."/>
            <person name="Mohammed S."/>
        </authorList>
    </citation>
    <scope>IDENTIFICATION BY MASS SPECTROMETRY [LARGE SCALE ANALYSIS]</scope>
</reference>
<reference key="3">
    <citation type="journal article" date="2011" name="Sci. Signal.">
        <title>System-wide temporal characterization of the proteome and phosphoproteome of human embryonic stem cell differentiation.</title>
        <authorList>
            <person name="Rigbolt K.T."/>
            <person name="Prokhorova T.A."/>
            <person name="Akimov V."/>
            <person name="Henningsen J."/>
            <person name="Johansen P.T."/>
            <person name="Kratchmarova I."/>
            <person name="Kassem M."/>
            <person name="Mann M."/>
            <person name="Olsen J.V."/>
            <person name="Blagoev B."/>
        </authorList>
    </citation>
    <scope>PHOSPHORYLATION [LARGE SCALE ANALYSIS] AT SER-246</scope>
    <scope>IDENTIFICATION BY MASS SPECTROMETRY [LARGE SCALE ANALYSIS]</scope>
</reference>
<reference key="4">
    <citation type="journal article" date="2012" name="Proc. Natl. Acad. Sci. U.S.A.">
        <title>N-terminal acetylome analyses and functional insights of the N-terminal acetyltransferase NatB.</title>
        <authorList>
            <person name="Van Damme P."/>
            <person name="Lasa M."/>
            <person name="Polevoda B."/>
            <person name="Gazquez C."/>
            <person name="Elosegui-Artola A."/>
            <person name="Kim D.S."/>
            <person name="De Juan-Pardo E."/>
            <person name="Demeyer K."/>
            <person name="Hole K."/>
            <person name="Larrea E."/>
            <person name="Timmerman E."/>
            <person name="Prieto J."/>
            <person name="Arnesen T."/>
            <person name="Sherman F."/>
            <person name="Gevaert K."/>
            <person name="Aldabe R."/>
        </authorList>
    </citation>
    <scope>ACETYLATION [LARGE SCALE ANALYSIS] AT ALA-2</scope>
    <scope>CLEAVAGE OF INITIATOR METHIONINE [LARGE SCALE ANALYSIS]</scope>
    <scope>IDENTIFICATION BY MASS SPECTROMETRY [LARGE SCALE ANALYSIS]</scope>
</reference>
<reference key="5">
    <citation type="journal article" date="2013" name="J. Proteome Res.">
        <title>Toward a comprehensive characterization of a human cancer cell phosphoproteome.</title>
        <authorList>
            <person name="Zhou H."/>
            <person name="Di Palma S."/>
            <person name="Preisinger C."/>
            <person name="Peng M."/>
            <person name="Polat A.N."/>
            <person name="Heck A.J."/>
            <person name="Mohammed S."/>
        </authorList>
    </citation>
    <scope>PHOSPHORYLATION [LARGE SCALE ANALYSIS] AT SER-246</scope>
    <scope>IDENTIFICATION BY MASS SPECTROMETRY [LARGE SCALE ANALYSIS]</scope>
    <source>
        <tissue>Erythroleukemia</tissue>
    </source>
</reference>
<reference key="6">
    <citation type="journal article" date="2014" name="J. Proteomics">
        <title>An enzyme assisted RP-RPLC approach for in-depth analysis of human liver phosphoproteome.</title>
        <authorList>
            <person name="Bian Y."/>
            <person name="Song C."/>
            <person name="Cheng K."/>
            <person name="Dong M."/>
            <person name="Wang F."/>
            <person name="Huang J."/>
            <person name="Sun D."/>
            <person name="Wang L."/>
            <person name="Ye M."/>
            <person name="Zou H."/>
        </authorList>
    </citation>
    <scope>PHOSPHORYLATION [LARGE SCALE ANALYSIS] AT SER-178 AND SER-246</scope>
    <scope>IDENTIFICATION BY MASS SPECTROMETRY [LARGE SCALE ANALYSIS]</scope>
    <source>
        <tissue>Liver</tissue>
    </source>
</reference>
<reference key="7">
    <citation type="journal article" date="2014" name="Mol. Biol. Cell">
        <title>DIPA-family coiled-coils bind conserved isoform-specific head domain of p120-catenin family: potential roles in hydrocephalus and heterotopia.</title>
        <authorList>
            <person name="Markham N.O."/>
            <person name="Doll C.A."/>
            <person name="Dohn M.R."/>
            <person name="Miller R.K."/>
            <person name="Yu H."/>
            <person name="Coffey R.J."/>
            <person name="McCrea P.D."/>
            <person name="Gamse J.T."/>
            <person name="Reynolds A.B."/>
        </authorList>
    </citation>
    <scope>FUNCTION</scope>
    <scope>INTERACTION WITH ARVCF; CTNND1; CTNND2 AND PKP4</scope>
    <scope>SUBCELLULAR LOCATION</scope>
</reference>
<protein>
    <recommendedName>
        <fullName>Coiled-coil domain-containing protein 85C</fullName>
    </recommendedName>
</protein>